<accession>Q9UIL1</accession>
<accession>B7WPH7</accession>
<accession>D3DNY7</accession>
<accession>E9PB65</accession>
<accession>Q6P5T9</accession>
<accession>Q7L2Y0</accession>
<accession>Q7Z4P2</accession>
<accession>Q96JY9</accession>
<accession>Q9BZB2</accession>
<name>SCOC_HUMAN</name>
<organism>
    <name type="scientific">Homo sapiens</name>
    <name type="common">Human</name>
    <dbReference type="NCBI Taxonomy" id="9606"/>
    <lineage>
        <taxon>Eukaryota</taxon>
        <taxon>Metazoa</taxon>
        <taxon>Chordata</taxon>
        <taxon>Craniata</taxon>
        <taxon>Vertebrata</taxon>
        <taxon>Euteleostomi</taxon>
        <taxon>Mammalia</taxon>
        <taxon>Eutheria</taxon>
        <taxon>Euarchontoglires</taxon>
        <taxon>Primates</taxon>
        <taxon>Haplorrhini</taxon>
        <taxon>Catarrhini</taxon>
        <taxon>Hominidae</taxon>
        <taxon>Homo</taxon>
    </lineage>
</organism>
<sequence>MRRRVFSSQDWRASGWDGMGFFSRRTFCGRSGRSCRGQLVQVSRPEVSAGSLLLPAPQAEDHSSRILYPRPKSLLPKMMNADMDAVDAENQVELEEKTRLINQVLELQHTLEDLSARVDAVKEENLKLKSENQVLGQYIENLMSASSVFQTTDTKSKRK</sequence>
<gene>
    <name type="primary">SCOC</name>
    <name type="synonym">SCOCO</name>
    <name type="ORF">HRIHFB2072</name>
</gene>
<evidence type="ECO:0000269" key="1">
    <source>
    </source>
</evidence>
<evidence type="ECO:0000269" key="2">
    <source>
    </source>
</evidence>
<evidence type="ECO:0000269" key="3">
    <source>
    </source>
</evidence>
<evidence type="ECO:0000303" key="4">
    <source>
    </source>
</evidence>
<evidence type="ECO:0000303" key="5">
    <source>
    </source>
</evidence>
<evidence type="ECO:0000303" key="6">
    <source ref="6"/>
</evidence>
<evidence type="ECO:0000305" key="7"/>
<evidence type="ECO:0007744" key="8">
    <source>
        <dbReference type="PDB" id="4BWD"/>
    </source>
</evidence>
<evidence type="ECO:0007829" key="9">
    <source>
        <dbReference type="PDB" id="4BWD"/>
    </source>
</evidence>
<feature type="chain" id="PRO_0000334164" description="Short coiled-coil protein">
    <location>
        <begin position="1"/>
        <end position="159"/>
    </location>
</feature>
<feature type="coiled-coil region" evidence="3 8">
    <location>
        <begin position="78"/>
        <end position="146"/>
    </location>
</feature>
<feature type="splice variant" id="VSP_033642" description="In isoform 2 and isoform 3." evidence="4 5">
    <location>
        <begin position="1"/>
        <end position="37"/>
    </location>
</feature>
<feature type="splice variant" id="VSP_033643" description="In isoform 2 and isoform 3." evidence="4 5">
    <original>QLVQVSRPEVSAGSLLLPAPQAE</original>
    <variation>MDGSRKEEEEDSTFTNISLADDI</variation>
    <location>
        <begin position="38"/>
        <end position="60"/>
    </location>
</feature>
<feature type="splice variant" id="VSP_033644" description="In isoform 4." evidence="6">
    <location>
        <begin position="85"/>
        <end position="112"/>
    </location>
</feature>
<feature type="splice variant" id="VSP_033645" description="In isoform 3." evidence="5">
    <location>
        <position position="85"/>
    </location>
</feature>
<feature type="mutagenesis site" description="Causes trimerization and impairs interaction with FEZ1 coiled coil but does not impair interaction with full-length FEZ1; when associated with L-97." evidence="3">
    <original>E</original>
    <variation>V</variation>
    <location>
        <position position="93"/>
    </location>
</feature>
<feature type="mutagenesis site" description="Causes trimerization and impairs interaction with FEZ1 coiled coil but does not impair interaction with full-length FEZ1; when associated with V-93." evidence="3">
    <original>K</original>
    <variation>L</variation>
    <location>
        <position position="97"/>
    </location>
</feature>
<feature type="mutagenesis site" description="Impairs interaction with FEZ1 coiled coil but does not impair interaction with full-length FEZ1." evidence="3">
    <original>R</original>
    <variation>E</variation>
    <location>
        <position position="117"/>
    </location>
</feature>
<feature type="mutagenesis site" description="Causes tetramerization and loss of interaction with FEZ1; when associated with V-132." evidence="3">
    <original>N</original>
    <variation>L</variation>
    <location>
        <position position="125"/>
    </location>
</feature>
<feature type="mutagenesis site" description="Causes tetramerization and loss of interaction with FEZ1; when associated with L-125." evidence="3">
    <original>N</original>
    <variation>V</variation>
    <location>
        <position position="132"/>
    </location>
</feature>
<feature type="sequence conflict" description="In Ref. 5; AAK01707 and 6; AAP97732." evidence="7" ref="5 6">
    <original>GRSG</original>
    <variation>HEGR</variation>
    <location>
        <begin position="29"/>
        <end position="32"/>
    </location>
</feature>
<feature type="turn" evidence="9">
    <location>
        <begin position="87"/>
        <end position="89"/>
    </location>
</feature>
<feature type="helix" evidence="9">
    <location>
        <begin position="90"/>
        <end position="144"/>
    </location>
</feature>
<feature type="sequence conflict" description="In Ref. 2; BAB55375." evidence="7" ref="2">
    <original>F</original>
    <variation>L</variation>
    <location sequence="Q9UIL1-2">
        <position position="14"/>
    </location>
</feature>
<dbReference type="EMBL" id="AK027797">
    <property type="protein sequence ID" value="BAB55375.1"/>
    <property type="molecule type" value="mRNA"/>
</dbReference>
<dbReference type="EMBL" id="AC093671">
    <property type="status" value="NOT_ANNOTATED_CDS"/>
    <property type="molecule type" value="Genomic_DNA"/>
</dbReference>
<dbReference type="EMBL" id="AC114771">
    <property type="status" value="NOT_ANNOTATED_CDS"/>
    <property type="molecule type" value="Genomic_DNA"/>
</dbReference>
<dbReference type="EMBL" id="CH471056">
    <property type="protein sequence ID" value="EAX05102.1"/>
    <property type="molecule type" value="Genomic_DNA"/>
</dbReference>
<dbReference type="EMBL" id="CH471056">
    <property type="protein sequence ID" value="EAX05104.1"/>
    <property type="molecule type" value="Genomic_DNA"/>
</dbReference>
<dbReference type="EMBL" id="CH471056">
    <property type="protein sequence ID" value="EAX05103.1"/>
    <property type="molecule type" value="Genomic_DNA"/>
</dbReference>
<dbReference type="EMBL" id="BC016511">
    <property type="protein sequence ID" value="AAH16511.2"/>
    <property type="molecule type" value="mRNA"/>
</dbReference>
<dbReference type="EMBL" id="BC062684">
    <property type="protein sequence ID" value="AAH62684.1"/>
    <property type="molecule type" value="mRNA"/>
</dbReference>
<dbReference type="EMBL" id="AF330205">
    <property type="protein sequence ID" value="AAK01707.1"/>
    <property type="status" value="ALT_INIT"/>
    <property type="molecule type" value="mRNA"/>
</dbReference>
<dbReference type="EMBL" id="AF448857">
    <property type="protein sequence ID" value="AAP97732.1"/>
    <property type="status" value="ALT_INIT"/>
    <property type="molecule type" value="mRNA"/>
</dbReference>
<dbReference type="EMBL" id="AB015335">
    <property type="protein sequence ID" value="BAA88116.1"/>
    <property type="molecule type" value="mRNA"/>
</dbReference>
<dbReference type="CCDS" id="CCDS3750.1">
    <molecule id="Q9UIL1-2"/>
</dbReference>
<dbReference type="RefSeq" id="NP_001146918.1">
    <molecule id="Q9UIL1-2"/>
    <property type="nucleotide sequence ID" value="NM_001153446.1"/>
</dbReference>
<dbReference type="RefSeq" id="NP_001146956.1">
    <property type="nucleotide sequence ID" value="NM_001153484.1"/>
</dbReference>
<dbReference type="RefSeq" id="NP_001147024.1">
    <property type="nucleotide sequence ID" value="NM_001153552.1"/>
</dbReference>
<dbReference type="RefSeq" id="NP_001147057.1">
    <molecule id="Q9UIL1-2"/>
    <property type="nucleotide sequence ID" value="NM_001153585.1"/>
</dbReference>
<dbReference type="RefSeq" id="NP_001147107.1">
    <molecule id="Q9UIL1-3"/>
    <property type="nucleotide sequence ID" value="NM_001153635.1"/>
</dbReference>
<dbReference type="RefSeq" id="NP_001147135.1">
    <property type="nucleotide sequence ID" value="NM_001153663.1"/>
</dbReference>
<dbReference type="RefSeq" id="NP_001147162.1">
    <property type="nucleotide sequence ID" value="NM_001153690.1"/>
</dbReference>
<dbReference type="RefSeq" id="NP_115936.2">
    <molecule id="Q9UIL1-2"/>
    <property type="nucleotide sequence ID" value="NM_032547.3"/>
</dbReference>
<dbReference type="PDB" id="4BWD">
    <property type="method" value="X-ray"/>
    <property type="resolution" value="2.70 A"/>
    <property type="chains" value="A/B/C=78-159"/>
</dbReference>
<dbReference type="PDB" id="7AA7">
    <property type="method" value="X-ray"/>
    <property type="resolution" value="1.45 A"/>
    <property type="chains" value="P/Q=95-102"/>
</dbReference>
<dbReference type="PDBsum" id="4BWD"/>
<dbReference type="PDBsum" id="7AA7"/>
<dbReference type="SMR" id="Q9UIL1"/>
<dbReference type="BioGRID" id="121943">
    <property type="interactions" value="54"/>
</dbReference>
<dbReference type="FunCoup" id="Q9UIL1">
    <property type="interactions" value="1054"/>
</dbReference>
<dbReference type="IntAct" id="Q9UIL1">
    <property type="interactions" value="45"/>
</dbReference>
<dbReference type="MINT" id="Q9UIL1"/>
<dbReference type="STRING" id="9606.ENSP00000477352"/>
<dbReference type="iPTMnet" id="Q9UIL1"/>
<dbReference type="PhosphoSitePlus" id="Q9UIL1"/>
<dbReference type="BioMuta" id="SCOC"/>
<dbReference type="DMDM" id="189046186"/>
<dbReference type="jPOST" id="Q9UIL1"/>
<dbReference type="MassIVE" id="Q9UIL1"/>
<dbReference type="PaxDb" id="9606-ENSP00000477352"/>
<dbReference type="PeptideAtlas" id="Q9UIL1"/>
<dbReference type="ProteomicsDB" id="19156"/>
<dbReference type="ProteomicsDB" id="84542">
    <molecule id="Q9UIL1-1"/>
</dbReference>
<dbReference type="ProteomicsDB" id="84543">
    <molecule id="Q9UIL1-2"/>
</dbReference>
<dbReference type="ProteomicsDB" id="84544">
    <molecule id="Q9UIL1-3"/>
</dbReference>
<dbReference type="ProteomicsDB" id="84545">
    <molecule id="Q9UIL1-4"/>
</dbReference>
<dbReference type="Pumba" id="Q9UIL1"/>
<dbReference type="Antibodypedia" id="52793">
    <property type="antibodies" value="68 antibodies from 20 providers"/>
</dbReference>
<dbReference type="DNASU" id="60592"/>
<dbReference type="Ensembl" id="ENST00000338517.8">
    <molecule id="Q9UIL1-2"/>
    <property type="protein sequence ID" value="ENSP00000345262.4"/>
    <property type="gene ID" value="ENSG00000153130.18"/>
</dbReference>
<dbReference type="Ensembl" id="ENST00000394203.7">
    <molecule id="Q9UIL1-2"/>
    <property type="protein sequence ID" value="ENSP00000377753.3"/>
    <property type="gene ID" value="ENSG00000153130.18"/>
</dbReference>
<dbReference type="Ensembl" id="ENST00000394205.7">
    <molecule id="Q9UIL1-2"/>
    <property type="protein sequence ID" value="ENSP00000377755.3"/>
    <property type="gene ID" value="ENSG00000153130.18"/>
</dbReference>
<dbReference type="GeneID" id="60592"/>
<dbReference type="KEGG" id="hsa:60592"/>
<dbReference type="UCSC" id="uc003iib.2">
    <molecule id="Q9UIL1-1"/>
    <property type="organism name" value="human"/>
</dbReference>
<dbReference type="AGR" id="HGNC:20335"/>
<dbReference type="CTD" id="60592"/>
<dbReference type="DisGeNET" id="60592"/>
<dbReference type="GeneCards" id="SCOC"/>
<dbReference type="HGNC" id="HGNC:20335">
    <property type="gene designation" value="SCOC"/>
</dbReference>
<dbReference type="HPA" id="ENSG00000153130">
    <property type="expression patterns" value="Low tissue specificity"/>
</dbReference>
<dbReference type="neXtProt" id="NX_Q9UIL1"/>
<dbReference type="OpenTargets" id="ENSG00000153130"/>
<dbReference type="PharmGKB" id="PA134972148"/>
<dbReference type="VEuPathDB" id="HostDB:ENSG00000153130"/>
<dbReference type="eggNOG" id="KOG3650">
    <property type="taxonomic scope" value="Eukaryota"/>
</dbReference>
<dbReference type="GeneTree" id="ENSGT00390000008828"/>
<dbReference type="HOGENOM" id="CLU_130081_1_0_1"/>
<dbReference type="InParanoid" id="Q9UIL1"/>
<dbReference type="OMA" id="FAMNCDM"/>
<dbReference type="OrthoDB" id="2163284at2759"/>
<dbReference type="PAN-GO" id="Q9UIL1">
    <property type="GO annotations" value="1 GO annotation based on evolutionary models"/>
</dbReference>
<dbReference type="PhylomeDB" id="Q9UIL1"/>
<dbReference type="TreeFam" id="TF323340"/>
<dbReference type="PathwayCommons" id="Q9UIL1"/>
<dbReference type="Reactome" id="R-HSA-6811440">
    <property type="pathway name" value="Retrograde transport at the Trans-Golgi-Network"/>
</dbReference>
<dbReference type="SignaLink" id="Q9UIL1"/>
<dbReference type="BioGRID-ORCS" id="60592">
    <property type="hits" value="20 hits in 1150 CRISPR screens"/>
</dbReference>
<dbReference type="ChiTaRS" id="SCOC">
    <property type="organism name" value="human"/>
</dbReference>
<dbReference type="EvolutionaryTrace" id="Q9UIL1"/>
<dbReference type="GenomeRNAi" id="60592"/>
<dbReference type="Pharos" id="Q9UIL1">
    <property type="development level" value="Tbio"/>
</dbReference>
<dbReference type="PRO" id="PR:Q9UIL1"/>
<dbReference type="Proteomes" id="UP000005640">
    <property type="component" value="Chromosome 4"/>
</dbReference>
<dbReference type="RNAct" id="Q9UIL1">
    <property type="molecule type" value="protein"/>
</dbReference>
<dbReference type="Bgee" id="ENSG00000153130">
    <property type="expression patterns" value="Expressed in lateral nuclear group of thalamus and 187 other cell types or tissues"/>
</dbReference>
<dbReference type="ExpressionAtlas" id="Q9UIL1">
    <property type="expression patterns" value="baseline and differential"/>
</dbReference>
<dbReference type="GO" id="GO:0005829">
    <property type="term" value="C:cytosol"/>
    <property type="evidence" value="ECO:0000304"/>
    <property type="project" value="Reactome"/>
</dbReference>
<dbReference type="GO" id="GO:0005794">
    <property type="term" value="C:Golgi apparatus"/>
    <property type="evidence" value="ECO:0000314"/>
    <property type="project" value="HPA"/>
</dbReference>
<dbReference type="GO" id="GO:0000139">
    <property type="term" value="C:Golgi membrane"/>
    <property type="evidence" value="ECO:0007669"/>
    <property type="project" value="UniProtKB-SubCell"/>
</dbReference>
<dbReference type="GO" id="GO:0005654">
    <property type="term" value="C:nucleoplasm"/>
    <property type="evidence" value="ECO:0000314"/>
    <property type="project" value="HPA"/>
</dbReference>
<dbReference type="GO" id="GO:0016239">
    <property type="term" value="P:positive regulation of macroautophagy"/>
    <property type="evidence" value="ECO:0000314"/>
    <property type="project" value="BHF-UCL"/>
</dbReference>
<dbReference type="GO" id="GO:0061635">
    <property type="term" value="P:regulation of protein complex stability"/>
    <property type="evidence" value="ECO:0000315"/>
    <property type="project" value="GO_Central"/>
</dbReference>
<dbReference type="FunFam" id="1.20.5.170:FF:000038">
    <property type="entry name" value="Short coiled-coil protein a"/>
    <property type="match status" value="1"/>
</dbReference>
<dbReference type="Gene3D" id="1.20.5.170">
    <property type="match status" value="1"/>
</dbReference>
<dbReference type="InterPro" id="IPR019357">
    <property type="entry name" value="SCOC"/>
</dbReference>
<dbReference type="PANTHER" id="PTHR21614">
    <property type="entry name" value="SHORT COILED COIL PROTEIN"/>
    <property type="match status" value="1"/>
</dbReference>
<dbReference type="PANTHER" id="PTHR21614:SF1">
    <property type="entry name" value="SHORT COILED-COIL PROTEIN"/>
    <property type="match status" value="1"/>
</dbReference>
<dbReference type="Pfam" id="PF10224">
    <property type="entry name" value="DUF2205"/>
    <property type="match status" value="1"/>
</dbReference>
<protein>
    <recommendedName>
        <fullName>Short coiled-coil protein</fullName>
    </recommendedName>
</protein>
<comment type="function">
    <text evidence="2">Positive regulator of amino acid starvation-induced autophagy.</text>
</comment>
<comment type="subunit">
    <text evidence="1 2 3">Homodimer (PubMed:24098481). Interacts with ARL1, ARL2 and ARL3 (PubMed:11303027). Directly interacts with FEZ1 and UVRAG (PubMed:22354037, PubMed:24098481). The interaction with UVRAG is reduced by amino acid starvation, but the complex is stabilized in the presence of FEZ1. Interacts with NRBF2 (PubMed:22354037).</text>
</comment>
<comment type="interaction">
    <interactant intactId="EBI-2686537">
        <id>Q9UIL1</id>
    </interactant>
    <interactant intactId="EBI-396435">
        <id>Q99689</id>
        <label>FEZ1</label>
    </interactant>
    <organismsDiffer>false</organismsDiffer>
    <experiments>3</experiments>
</comment>
<comment type="interaction">
    <interactant intactId="EBI-2686537">
        <id>Q9UIL1</id>
    </interactant>
    <interactant intactId="EBI-10171697">
        <id>Q6A162</id>
        <label>KRT40</label>
    </interactant>
    <organismsDiffer>false</organismsDiffer>
    <experiments>3</experiments>
</comment>
<comment type="interaction">
    <interactant intactId="EBI-2686537">
        <id>Q9UIL1</id>
    </interactant>
    <interactant intactId="EBI-1397509">
        <id>P0DPB3</id>
        <label>SCHIP1</label>
    </interactant>
    <organismsDiffer>false</organismsDiffer>
    <experiments>6</experiments>
</comment>
<comment type="interaction">
    <interactant intactId="EBI-2686537">
        <id>Q9UIL1</id>
    </interactant>
    <interactant intactId="EBI-533224">
        <id>P15884</id>
        <label>TCF4</label>
    </interactant>
    <organismsDiffer>false</organismsDiffer>
    <experiments>3</experiments>
</comment>
<comment type="interaction">
    <interactant intactId="EBI-10692913">
        <id>Q9UIL1-3</id>
    </interactant>
    <interactant intactId="EBI-10229433">
        <id>Q13515</id>
        <label>BFSP2</label>
    </interactant>
    <organismsDiffer>false</organismsDiffer>
    <experiments>3</experiments>
</comment>
<comment type="interaction">
    <interactant intactId="EBI-10692913">
        <id>Q9UIL1-3</id>
    </interactant>
    <interactant intactId="EBI-742054">
        <id>Q96D03</id>
        <label>DDIT4L</label>
    </interactant>
    <organismsDiffer>false</organismsDiffer>
    <experiments>3</experiments>
</comment>
<comment type="interaction">
    <interactant intactId="EBI-10692913">
        <id>Q9UIL1-3</id>
    </interactant>
    <interactant intactId="EBI-13371226">
        <id>Q9NYK6-3</id>
        <label>EURL</label>
    </interactant>
    <organismsDiffer>false</organismsDiffer>
    <experiments>3</experiments>
</comment>
<comment type="interaction">
    <interactant intactId="EBI-10692913">
        <id>Q9UIL1-3</id>
    </interactant>
    <interactant intactId="EBI-396453">
        <id>Q9UHY8</id>
        <label>FEZ2</label>
    </interactant>
    <organismsDiffer>false</organismsDiffer>
    <experiments>3</experiments>
</comment>
<comment type="interaction">
    <interactant intactId="EBI-10692913">
        <id>Q9UIL1-3</id>
    </interactant>
    <interactant intactId="EBI-14069005">
        <id>Q9BVG8-5</id>
        <label>KIFC3</label>
    </interactant>
    <organismsDiffer>false</organismsDiffer>
    <experiments>3</experiments>
</comment>
<comment type="interaction">
    <interactant intactId="EBI-10692913">
        <id>Q9UIL1-3</id>
    </interactant>
    <interactant intactId="EBI-11962426">
        <id>P0DPB3-4</id>
        <label>SCHIP1</label>
    </interactant>
    <organismsDiffer>false</organismsDiffer>
    <experiments>5</experiments>
</comment>
<comment type="interaction">
    <interactant intactId="EBI-10692913">
        <id>Q9UIL1-3</id>
    </interactant>
    <interactant intactId="EBI-1773646">
        <id>Q9BRV8</id>
        <label>SIKE1</label>
    </interactant>
    <organismsDiffer>false</organismsDiffer>
    <experiments>3</experiments>
</comment>
<comment type="interaction">
    <interactant intactId="EBI-10692913">
        <id>Q9UIL1-3</id>
    </interactant>
    <interactant intactId="EBI-8451480">
        <id>O75865-2</id>
        <label>TRAPPC6A</label>
    </interactant>
    <organismsDiffer>false</organismsDiffer>
    <experiments>3</experiments>
</comment>
<comment type="subcellular location">
    <subcellularLocation>
        <location evidence="1 2 3">Golgi apparatus membrane</location>
        <topology evidence="1 3">Peripheral membrane protein</topology>
        <orientation evidence="1 3">Cytoplasmic side</orientation>
    </subcellularLocation>
    <subcellularLocation>
        <location evidence="2">Golgi apparatus</location>
        <location evidence="2">trans-Golgi network</location>
    </subcellularLocation>
    <subcellularLocation>
        <location evidence="1 3">Cytoplasm</location>
        <location evidence="1 3">Cytosol</location>
    </subcellularLocation>
</comment>
<comment type="alternative products">
    <event type="alternative splicing"/>
    <isoform>
        <id>Q9UIL1-1</id>
        <name>1</name>
        <sequence type="displayed"/>
    </isoform>
    <isoform>
        <id>Q9UIL1-2</id>
        <name>2</name>
        <sequence type="described" ref="VSP_033642 VSP_033643"/>
    </isoform>
    <isoform>
        <id>Q9UIL1-3</id>
        <name>3</name>
        <sequence type="described" ref="VSP_033642 VSP_033643 VSP_033645"/>
    </isoform>
    <isoform>
        <id>Q9UIL1-4</id>
        <name>4</name>
        <sequence type="described" ref="VSP_033644"/>
    </isoform>
</comment>
<comment type="tissue specificity">
    <text evidence="1">Widely expressed with highest levels in brain, heart and skeletal muscle.</text>
</comment>
<comment type="similarity">
    <text evidence="7">Belongs to the SCOC family.</text>
</comment>
<comment type="sequence caution" evidence="7">
    <conflict type="erroneous initiation">
        <sequence resource="EMBL-CDS" id="AAK01707"/>
    </conflict>
    <text>Truncated N-terminus.</text>
</comment>
<comment type="sequence caution" evidence="7">
    <conflict type="erroneous initiation">
        <sequence resource="EMBL-CDS" id="AAP97732"/>
    </conflict>
    <text>Truncated N-terminus.</text>
</comment>
<reference key="1">
    <citation type="journal article" date="2004" name="Nat. Genet.">
        <title>Complete sequencing and characterization of 21,243 full-length human cDNAs.</title>
        <authorList>
            <person name="Ota T."/>
            <person name="Suzuki Y."/>
            <person name="Nishikawa T."/>
            <person name="Otsuki T."/>
            <person name="Sugiyama T."/>
            <person name="Irie R."/>
            <person name="Wakamatsu A."/>
            <person name="Hayashi K."/>
            <person name="Sato H."/>
            <person name="Nagai K."/>
            <person name="Kimura K."/>
            <person name="Makita H."/>
            <person name="Sekine M."/>
            <person name="Obayashi M."/>
            <person name="Nishi T."/>
            <person name="Shibahara T."/>
            <person name="Tanaka T."/>
            <person name="Ishii S."/>
            <person name="Yamamoto J."/>
            <person name="Saito K."/>
            <person name="Kawai Y."/>
            <person name="Isono Y."/>
            <person name="Nakamura Y."/>
            <person name="Nagahari K."/>
            <person name="Murakami K."/>
            <person name="Yasuda T."/>
            <person name="Iwayanagi T."/>
            <person name="Wagatsuma M."/>
            <person name="Shiratori A."/>
            <person name="Sudo H."/>
            <person name="Hosoiri T."/>
            <person name="Kaku Y."/>
            <person name="Kodaira H."/>
            <person name="Kondo H."/>
            <person name="Sugawara M."/>
            <person name="Takahashi M."/>
            <person name="Kanda K."/>
            <person name="Yokoi T."/>
            <person name="Furuya T."/>
            <person name="Kikkawa E."/>
            <person name="Omura Y."/>
            <person name="Abe K."/>
            <person name="Kamihara K."/>
            <person name="Katsuta N."/>
            <person name="Sato K."/>
            <person name="Tanikawa M."/>
            <person name="Yamazaki M."/>
            <person name="Ninomiya K."/>
            <person name="Ishibashi T."/>
            <person name="Yamashita H."/>
            <person name="Murakawa K."/>
            <person name="Fujimori K."/>
            <person name="Tanai H."/>
            <person name="Kimata M."/>
            <person name="Watanabe M."/>
            <person name="Hiraoka S."/>
            <person name="Chiba Y."/>
            <person name="Ishida S."/>
            <person name="Ono Y."/>
            <person name="Takiguchi S."/>
            <person name="Watanabe S."/>
            <person name="Yosida M."/>
            <person name="Hotuta T."/>
            <person name="Kusano J."/>
            <person name="Kanehori K."/>
            <person name="Takahashi-Fujii A."/>
            <person name="Hara H."/>
            <person name="Tanase T.-O."/>
            <person name="Nomura Y."/>
            <person name="Togiya S."/>
            <person name="Komai F."/>
            <person name="Hara R."/>
            <person name="Takeuchi K."/>
            <person name="Arita M."/>
            <person name="Imose N."/>
            <person name="Musashino K."/>
            <person name="Yuuki H."/>
            <person name="Oshima A."/>
            <person name="Sasaki N."/>
            <person name="Aotsuka S."/>
            <person name="Yoshikawa Y."/>
            <person name="Matsunawa H."/>
            <person name="Ichihara T."/>
            <person name="Shiohata N."/>
            <person name="Sano S."/>
            <person name="Moriya S."/>
            <person name="Momiyama H."/>
            <person name="Satoh N."/>
            <person name="Takami S."/>
            <person name="Terashima Y."/>
            <person name="Suzuki O."/>
            <person name="Nakagawa S."/>
            <person name="Senoh A."/>
            <person name="Mizoguchi H."/>
            <person name="Goto Y."/>
            <person name="Shimizu F."/>
            <person name="Wakebe H."/>
            <person name="Hishigaki H."/>
            <person name="Watanabe T."/>
            <person name="Sugiyama A."/>
            <person name="Takemoto M."/>
            <person name="Kawakami B."/>
            <person name="Yamazaki M."/>
            <person name="Watanabe K."/>
            <person name="Kumagai A."/>
            <person name="Itakura S."/>
            <person name="Fukuzumi Y."/>
            <person name="Fujimori Y."/>
            <person name="Komiyama M."/>
            <person name="Tashiro H."/>
            <person name="Tanigami A."/>
            <person name="Fujiwara T."/>
            <person name="Ono T."/>
            <person name="Yamada K."/>
            <person name="Fujii Y."/>
            <person name="Ozaki K."/>
            <person name="Hirao M."/>
            <person name="Ohmori Y."/>
            <person name="Kawabata A."/>
            <person name="Hikiji T."/>
            <person name="Kobatake N."/>
            <person name="Inagaki H."/>
            <person name="Ikema Y."/>
            <person name="Okamoto S."/>
            <person name="Okitani R."/>
            <person name="Kawakami T."/>
            <person name="Noguchi S."/>
            <person name="Itoh T."/>
            <person name="Shigeta K."/>
            <person name="Senba T."/>
            <person name="Matsumura K."/>
            <person name="Nakajima Y."/>
            <person name="Mizuno T."/>
            <person name="Morinaga M."/>
            <person name="Sasaki M."/>
            <person name="Togashi T."/>
            <person name="Oyama M."/>
            <person name="Hata H."/>
            <person name="Watanabe M."/>
            <person name="Komatsu T."/>
            <person name="Mizushima-Sugano J."/>
            <person name="Satoh T."/>
            <person name="Shirai Y."/>
            <person name="Takahashi Y."/>
            <person name="Nakagawa K."/>
            <person name="Okumura K."/>
            <person name="Nagase T."/>
            <person name="Nomura N."/>
            <person name="Kikuchi H."/>
            <person name="Masuho Y."/>
            <person name="Yamashita R."/>
            <person name="Nakai K."/>
            <person name="Yada T."/>
            <person name="Nakamura Y."/>
            <person name="Ohara O."/>
            <person name="Isogai T."/>
            <person name="Sugano S."/>
        </authorList>
    </citation>
    <scope>NUCLEOTIDE SEQUENCE [LARGE SCALE MRNA] (ISOFORM 2)</scope>
    <source>
        <tissue>Placenta</tissue>
    </source>
</reference>
<reference key="2">
    <citation type="journal article" date="2005" name="Nature">
        <title>Generation and annotation of the DNA sequences of human chromosomes 2 and 4.</title>
        <authorList>
            <person name="Hillier L.W."/>
            <person name="Graves T.A."/>
            <person name="Fulton R.S."/>
            <person name="Fulton L.A."/>
            <person name="Pepin K.H."/>
            <person name="Minx P."/>
            <person name="Wagner-McPherson C."/>
            <person name="Layman D."/>
            <person name="Wylie K."/>
            <person name="Sekhon M."/>
            <person name="Becker M.C."/>
            <person name="Fewell G.A."/>
            <person name="Delehaunty K.D."/>
            <person name="Miner T.L."/>
            <person name="Nash W.E."/>
            <person name="Kremitzki C."/>
            <person name="Oddy L."/>
            <person name="Du H."/>
            <person name="Sun H."/>
            <person name="Bradshaw-Cordum H."/>
            <person name="Ali J."/>
            <person name="Carter J."/>
            <person name="Cordes M."/>
            <person name="Harris A."/>
            <person name="Isak A."/>
            <person name="van Brunt A."/>
            <person name="Nguyen C."/>
            <person name="Du F."/>
            <person name="Courtney L."/>
            <person name="Kalicki J."/>
            <person name="Ozersky P."/>
            <person name="Abbott S."/>
            <person name="Armstrong J."/>
            <person name="Belter E.A."/>
            <person name="Caruso L."/>
            <person name="Cedroni M."/>
            <person name="Cotton M."/>
            <person name="Davidson T."/>
            <person name="Desai A."/>
            <person name="Elliott G."/>
            <person name="Erb T."/>
            <person name="Fronick C."/>
            <person name="Gaige T."/>
            <person name="Haakenson W."/>
            <person name="Haglund K."/>
            <person name="Holmes A."/>
            <person name="Harkins R."/>
            <person name="Kim K."/>
            <person name="Kruchowski S.S."/>
            <person name="Strong C.M."/>
            <person name="Grewal N."/>
            <person name="Goyea E."/>
            <person name="Hou S."/>
            <person name="Levy A."/>
            <person name="Martinka S."/>
            <person name="Mead K."/>
            <person name="McLellan M.D."/>
            <person name="Meyer R."/>
            <person name="Randall-Maher J."/>
            <person name="Tomlinson C."/>
            <person name="Dauphin-Kohlberg S."/>
            <person name="Kozlowicz-Reilly A."/>
            <person name="Shah N."/>
            <person name="Swearengen-Shahid S."/>
            <person name="Snider J."/>
            <person name="Strong J.T."/>
            <person name="Thompson J."/>
            <person name="Yoakum M."/>
            <person name="Leonard S."/>
            <person name="Pearman C."/>
            <person name="Trani L."/>
            <person name="Radionenko M."/>
            <person name="Waligorski J.E."/>
            <person name="Wang C."/>
            <person name="Rock S.M."/>
            <person name="Tin-Wollam A.-M."/>
            <person name="Maupin R."/>
            <person name="Latreille P."/>
            <person name="Wendl M.C."/>
            <person name="Yang S.-P."/>
            <person name="Pohl C."/>
            <person name="Wallis J.W."/>
            <person name="Spieth J."/>
            <person name="Bieri T.A."/>
            <person name="Berkowicz N."/>
            <person name="Nelson J.O."/>
            <person name="Osborne J."/>
            <person name="Ding L."/>
            <person name="Meyer R."/>
            <person name="Sabo A."/>
            <person name="Shotland Y."/>
            <person name="Sinha P."/>
            <person name="Wohldmann P.E."/>
            <person name="Cook L.L."/>
            <person name="Hickenbotham M.T."/>
            <person name="Eldred J."/>
            <person name="Williams D."/>
            <person name="Jones T.A."/>
            <person name="She X."/>
            <person name="Ciccarelli F.D."/>
            <person name="Izaurralde E."/>
            <person name="Taylor J."/>
            <person name="Schmutz J."/>
            <person name="Myers R.M."/>
            <person name="Cox D.R."/>
            <person name="Huang X."/>
            <person name="McPherson J.D."/>
            <person name="Mardis E.R."/>
            <person name="Clifton S.W."/>
            <person name="Warren W.C."/>
            <person name="Chinwalla A.T."/>
            <person name="Eddy S.R."/>
            <person name="Marra M.A."/>
            <person name="Ovcharenko I."/>
            <person name="Furey T.S."/>
            <person name="Miller W."/>
            <person name="Eichler E.E."/>
            <person name="Bork P."/>
            <person name="Suyama M."/>
            <person name="Torrents D."/>
            <person name="Waterston R.H."/>
            <person name="Wilson R.K."/>
        </authorList>
    </citation>
    <scope>NUCLEOTIDE SEQUENCE [LARGE SCALE GENOMIC DNA]</scope>
</reference>
<reference key="3">
    <citation type="submission" date="2005-09" db="EMBL/GenBank/DDBJ databases">
        <authorList>
            <person name="Mural R.J."/>
            <person name="Istrail S."/>
            <person name="Sutton G.G."/>
            <person name="Florea L."/>
            <person name="Halpern A.L."/>
            <person name="Mobarry C.M."/>
            <person name="Lippert R."/>
            <person name="Walenz B."/>
            <person name="Shatkay H."/>
            <person name="Dew I."/>
            <person name="Miller J.R."/>
            <person name="Flanigan M.J."/>
            <person name="Edwards N.J."/>
            <person name="Bolanos R."/>
            <person name="Fasulo D."/>
            <person name="Halldorsson B.V."/>
            <person name="Hannenhalli S."/>
            <person name="Turner R."/>
            <person name="Yooseph S."/>
            <person name="Lu F."/>
            <person name="Nusskern D.R."/>
            <person name="Shue B.C."/>
            <person name="Zheng X.H."/>
            <person name="Zhong F."/>
            <person name="Delcher A.L."/>
            <person name="Huson D.H."/>
            <person name="Kravitz S.A."/>
            <person name="Mouchard L."/>
            <person name="Reinert K."/>
            <person name="Remington K.A."/>
            <person name="Clark A.G."/>
            <person name="Waterman M.S."/>
            <person name="Eichler E.E."/>
            <person name="Adams M.D."/>
            <person name="Hunkapiller M.W."/>
            <person name="Myers E.W."/>
            <person name="Venter J.C."/>
        </authorList>
    </citation>
    <scope>NUCLEOTIDE SEQUENCE [LARGE SCALE GENOMIC DNA]</scope>
</reference>
<reference key="4">
    <citation type="journal article" date="2004" name="Genome Res.">
        <title>The status, quality, and expansion of the NIH full-length cDNA project: the Mammalian Gene Collection (MGC).</title>
        <authorList>
            <consortium name="The MGC Project Team"/>
        </authorList>
    </citation>
    <scope>NUCLEOTIDE SEQUENCE [LARGE SCALE MRNA] (ISOFORM 3)</scope>
    <scope>NUCLEOTIDE SEQUENCE [LARGE SCALE MRNA] OF 45-159 (ISOFORM 1)</scope>
    <source>
        <tissue>Lung</tissue>
        <tissue>Ovary</tissue>
    </source>
</reference>
<reference key="5">
    <citation type="journal article" date="2001" name="J. Biol. Chem.">
        <title>ADP-ribosylation factors (ARFs) and ARF-like 1 (ARL1) have both specific and shared effectors: characterizing ARL1-binding proteins.</title>
        <authorList>
            <person name="Van Valkenburgh H."/>
            <person name="Shern J.F."/>
            <person name="Sharer J.D."/>
            <person name="Zhu X."/>
            <person name="Kahn R.A."/>
        </authorList>
    </citation>
    <scope>NUCLEOTIDE SEQUENCE [MRNA] OF 29-159 (ISOFORM 1)</scope>
    <scope>INTERACTION WITH ARL1; ARL2 AND ARL3</scope>
    <scope>TISSUE SPECIFICITY</scope>
    <scope>SUBCELLULAR LOCATION</scope>
</reference>
<reference key="6">
    <citation type="submission" date="2001-11" db="EMBL/GenBank/DDBJ databases">
        <authorList>
            <person name="Guo J.H."/>
            <person name="Yu L."/>
        </authorList>
    </citation>
    <scope>NUCLEOTIDE SEQUENCE [LARGE SCALE MRNA] OF 29-159 (ISOFORM 4)</scope>
    <source>
        <tissue>Brain</tissue>
    </source>
</reference>
<reference key="7">
    <citation type="journal article" date="1998" name="Nat. Biotechnol.">
        <title>Selection system for genes encoding nuclear-targeted proteins.</title>
        <authorList>
            <person name="Ueki N."/>
            <person name="Oda T."/>
            <person name="Kondo M."/>
            <person name="Yano K."/>
            <person name="Noguchi T."/>
            <person name="Muramatsu M.-A."/>
        </authorList>
    </citation>
    <scope>NUCLEOTIDE SEQUENCE [LARGE SCALE MRNA] OF 35-159 (ISOFORM 1)</scope>
    <source>
        <tissue>Fetal brain</tissue>
    </source>
</reference>
<reference key="8">
    <citation type="journal article" date="2012" name="EMBO J.">
        <title>Genome-wide siRNA screen reveals amino acid starvation-induced autophagy requires SCOC and WAC.</title>
        <authorList>
            <person name="McKnight N.C."/>
            <person name="Jefferies H.B."/>
            <person name="Alemu E.A."/>
            <person name="Saunders R.E."/>
            <person name="Howell M."/>
            <person name="Johansen T."/>
            <person name="Tooze S.A."/>
        </authorList>
    </citation>
    <scope>FUNCTION</scope>
    <scope>INTERACTION WITH FEZ1; NRBF2 AND UVRAG</scope>
    <scope>SUBCELLULAR LOCATION</scope>
</reference>
<reference evidence="8" key="9">
    <citation type="journal article" date="2013" name="PLoS ONE">
        <title>Crystal structure of the human short coiled coil protein and insights into SCOC-FEZ1 complex formation.</title>
        <authorList>
            <person name="Behrens C."/>
            <person name="Binotti B."/>
            <person name="Schmidt C."/>
            <person name="Robinson C.V."/>
            <person name="Chua J.J."/>
            <person name="Kuhnel K."/>
        </authorList>
    </citation>
    <scope>X-RAY CRYSTALLOGRAPHY (2.70 ANGSTROMS) OF 78-159</scope>
    <scope>COILED COIL</scope>
    <scope>INTERACTION WITH FEZ1</scope>
    <scope>SUBUNIT</scope>
    <scope>SUBCELLULAR LOCATION</scope>
    <scope>MUTAGENESIS OF GLU-93; LYS-97; ARG-117; ASN-125 AND ASN-132</scope>
</reference>
<keyword id="KW-0002">3D-structure</keyword>
<keyword id="KW-0025">Alternative splicing</keyword>
<keyword id="KW-0175">Coiled coil</keyword>
<keyword id="KW-0963">Cytoplasm</keyword>
<keyword id="KW-0333">Golgi apparatus</keyword>
<keyword id="KW-0472">Membrane</keyword>
<keyword id="KW-1267">Proteomics identification</keyword>
<keyword id="KW-1185">Reference proteome</keyword>
<proteinExistence type="evidence at protein level"/>